<gene>
    <name evidence="1" type="primary">gmk</name>
    <name type="ordered locus">NGO_1310</name>
</gene>
<reference key="1">
    <citation type="submission" date="2003-03" db="EMBL/GenBank/DDBJ databases">
        <title>The complete genome sequence of Neisseria gonorrhoeae.</title>
        <authorList>
            <person name="Lewis L.A."/>
            <person name="Gillaspy A.F."/>
            <person name="McLaughlin R.E."/>
            <person name="Gipson M."/>
            <person name="Ducey T.F."/>
            <person name="Ownbey T."/>
            <person name="Hartman K."/>
            <person name="Nydick C."/>
            <person name="Carson M.B."/>
            <person name="Vaughn J."/>
            <person name="Thomson C."/>
            <person name="Song L."/>
            <person name="Lin S."/>
            <person name="Yuan X."/>
            <person name="Najar F."/>
            <person name="Zhan M."/>
            <person name="Ren Q."/>
            <person name="Zhu H."/>
            <person name="Qi S."/>
            <person name="Kenton S.M."/>
            <person name="Lai H."/>
            <person name="White J.D."/>
            <person name="Clifton S."/>
            <person name="Roe B.A."/>
            <person name="Dyer D.W."/>
        </authorList>
    </citation>
    <scope>NUCLEOTIDE SEQUENCE [LARGE SCALE GENOMIC DNA]</scope>
    <source>
        <strain>ATCC 700825 / FA 1090</strain>
    </source>
</reference>
<sequence>MSAYRKGNIFIISAASGTGKTTLVSRLLANHNGLRVSVSHTTRPPREGEANGVHYHFVSKEEFESLIAQEAFLEYADVFGNYYGTSTEGVNALAAAGYDVILEIDVQGAAQVRNALPEAVGIFILPPSFDVLAARLKGRGTDSREVIQRRLSKARHEIEQSVLFDFVVVNDDLEKAEGDLLHIVNACRLKRSRQLGFIADLLENS</sequence>
<dbReference type="EC" id="2.7.4.8" evidence="1"/>
<dbReference type="EMBL" id="AE004969">
    <property type="protein sequence ID" value="AAW89962.1"/>
    <property type="molecule type" value="Genomic_DNA"/>
</dbReference>
<dbReference type="RefSeq" id="WP_003691634.1">
    <property type="nucleotide sequence ID" value="NC_002946.2"/>
</dbReference>
<dbReference type="RefSeq" id="YP_208374.1">
    <property type="nucleotide sequence ID" value="NC_002946.2"/>
</dbReference>
<dbReference type="SMR" id="Q5F775"/>
<dbReference type="STRING" id="242231.NGO_1310"/>
<dbReference type="GeneID" id="66753513"/>
<dbReference type="KEGG" id="ngo:NGO_1310"/>
<dbReference type="PATRIC" id="fig|242231.10.peg.1541"/>
<dbReference type="HOGENOM" id="CLU_001715_1_2_4"/>
<dbReference type="Proteomes" id="UP000000535">
    <property type="component" value="Chromosome"/>
</dbReference>
<dbReference type="GO" id="GO:0005829">
    <property type="term" value="C:cytosol"/>
    <property type="evidence" value="ECO:0007669"/>
    <property type="project" value="TreeGrafter"/>
</dbReference>
<dbReference type="GO" id="GO:0005524">
    <property type="term" value="F:ATP binding"/>
    <property type="evidence" value="ECO:0007669"/>
    <property type="project" value="UniProtKB-UniRule"/>
</dbReference>
<dbReference type="GO" id="GO:0004385">
    <property type="term" value="F:guanylate kinase activity"/>
    <property type="evidence" value="ECO:0007669"/>
    <property type="project" value="UniProtKB-UniRule"/>
</dbReference>
<dbReference type="CDD" id="cd00071">
    <property type="entry name" value="GMPK"/>
    <property type="match status" value="1"/>
</dbReference>
<dbReference type="FunFam" id="3.30.63.10:FF:000002">
    <property type="entry name" value="Guanylate kinase 1"/>
    <property type="match status" value="1"/>
</dbReference>
<dbReference type="Gene3D" id="3.30.63.10">
    <property type="entry name" value="Guanylate Kinase phosphate binding domain"/>
    <property type="match status" value="1"/>
</dbReference>
<dbReference type="Gene3D" id="3.40.50.300">
    <property type="entry name" value="P-loop containing nucleotide triphosphate hydrolases"/>
    <property type="match status" value="1"/>
</dbReference>
<dbReference type="HAMAP" id="MF_00328">
    <property type="entry name" value="Guanylate_kinase"/>
    <property type="match status" value="1"/>
</dbReference>
<dbReference type="InterPro" id="IPR008145">
    <property type="entry name" value="GK/Ca_channel_bsu"/>
</dbReference>
<dbReference type="InterPro" id="IPR008144">
    <property type="entry name" value="Guanylate_kin-like_dom"/>
</dbReference>
<dbReference type="InterPro" id="IPR017665">
    <property type="entry name" value="Guanylate_kinase"/>
</dbReference>
<dbReference type="InterPro" id="IPR020590">
    <property type="entry name" value="Guanylate_kinase_CS"/>
</dbReference>
<dbReference type="InterPro" id="IPR027417">
    <property type="entry name" value="P-loop_NTPase"/>
</dbReference>
<dbReference type="NCBIfam" id="TIGR03263">
    <property type="entry name" value="guanyl_kin"/>
    <property type="match status" value="1"/>
</dbReference>
<dbReference type="PANTHER" id="PTHR23117:SF13">
    <property type="entry name" value="GUANYLATE KINASE"/>
    <property type="match status" value="1"/>
</dbReference>
<dbReference type="PANTHER" id="PTHR23117">
    <property type="entry name" value="GUANYLATE KINASE-RELATED"/>
    <property type="match status" value="1"/>
</dbReference>
<dbReference type="Pfam" id="PF00625">
    <property type="entry name" value="Guanylate_kin"/>
    <property type="match status" value="1"/>
</dbReference>
<dbReference type="SMART" id="SM00072">
    <property type="entry name" value="GuKc"/>
    <property type="match status" value="1"/>
</dbReference>
<dbReference type="SUPFAM" id="SSF52540">
    <property type="entry name" value="P-loop containing nucleoside triphosphate hydrolases"/>
    <property type="match status" value="1"/>
</dbReference>
<dbReference type="PROSITE" id="PS00856">
    <property type="entry name" value="GUANYLATE_KINASE_1"/>
    <property type="match status" value="1"/>
</dbReference>
<dbReference type="PROSITE" id="PS50052">
    <property type="entry name" value="GUANYLATE_KINASE_2"/>
    <property type="match status" value="1"/>
</dbReference>
<proteinExistence type="inferred from homology"/>
<organism>
    <name type="scientific">Neisseria gonorrhoeae (strain ATCC 700825 / FA 1090)</name>
    <dbReference type="NCBI Taxonomy" id="242231"/>
    <lineage>
        <taxon>Bacteria</taxon>
        <taxon>Pseudomonadati</taxon>
        <taxon>Pseudomonadota</taxon>
        <taxon>Betaproteobacteria</taxon>
        <taxon>Neisseriales</taxon>
        <taxon>Neisseriaceae</taxon>
        <taxon>Neisseria</taxon>
    </lineage>
</organism>
<keyword id="KW-0067">ATP-binding</keyword>
<keyword id="KW-0963">Cytoplasm</keyword>
<keyword id="KW-0418">Kinase</keyword>
<keyword id="KW-0547">Nucleotide-binding</keyword>
<keyword id="KW-1185">Reference proteome</keyword>
<keyword id="KW-0808">Transferase</keyword>
<feature type="chain" id="PRO_0000266356" description="Guanylate kinase">
    <location>
        <begin position="1"/>
        <end position="205"/>
    </location>
</feature>
<feature type="domain" description="Guanylate kinase-like" evidence="1">
    <location>
        <begin position="7"/>
        <end position="185"/>
    </location>
</feature>
<feature type="binding site" evidence="1">
    <location>
        <begin position="14"/>
        <end position="21"/>
    </location>
    <ligand>
        <name>ATP</name>
        <dbReference type="ChEBI" id="CHEBI:30616"/>
    </ligand>
</feature>
<protein>
    <recommendedName>
        <fullName evidence="1">Guanylate kinase</fullName>
        <ecNumber evidence="1">2.7.4.8</ecNumber>
    </recommendedName>
    <alternativeName>
        <fullName evidence="1">GMP kinase</fullName>
    </alternativeName>
</protein>
<accession>Q5F775</accession>
<name>KGUA_NEIG1</name>
<evidence type="ECO:0000255" key="1">
    <source>
        <dbReference type="HAMAP-Rule" id="MF_00328"/>
    </source>
</evidence>
<comment type="function">
    <text evidence="1">Essential for recycling GMP and indirectly, cGMP.</text>
</comment>
<comment type="catalytic activity">
    <reaction evidence="1">
        <text>GMP + ATP = GDP + ADP</text>
        <dbReference type="Rhea" id="RHEA:20780"/>
        <dbReference type="ChEBI" id="CHEBI:30616"/>
        <dbReference type="ChEBI" id="CHEBI:58115"/>
        <dbReference type="ChEBI" id="CHEBI:58189"/>
        <dbReference type="ChEBI" id="CHEBI:456216"/>
        <dbReference type="EC" id="2.7.4.8"/>
    </reaction>
</comment>
<comment type="subcellular location">
    <subcellularLocation>
        <location evidence="1">Cytoplasm</location>
    </subcellularLocation>
</comment>
<comment type="similarity">
    <text evidence="1">Belongs to the guanylate kinase family.</text>
</comment>